<organism>
    <name type="scientific">Orgyia pseudotsugata multicapsid polyhedrosis virus</name>
    <name type="common">OpMNPV</name>
    <dbReference type="NCBI Taxonomy" id="262177"/>
    <lineage>
        <taxon>Viruses</taxon>
        <taxon>Viruses incertae sedis</taxon>
        <taxon>Naldaviricetes</taxon>
        <taxon>Lefavirales</taxon>
        <taxon>Baculoviridae</taxon>
        <taxon>Alphabaculovirus</taxon>
        <taxon>Alphabaculovirus orpseudotsugatae</taxon>
    </lineage>
</organism>
<protein>
    <recommendedName>
        <fullName>Uncharacterized 12.2 kDa protein in P6.5-VP48 intergenic region</fullName>
    </recommendedName>
    <alternativeName>
        <fullName>ORF2</fullName>
    </alternativeName>
    <alternativeName>
        <fullName>P12</fullName>
    </alternativeName>
</protein>
<name>Y102_NPVOP</name>
<organismHost>
    <name type="scientific">Orgyia pseudotsugata</name>
    <name type="common">Douglas-fir tussock moth</name>
    <dbReference type="NCBI Taxonomy" id="33414"/>
</organismHost>
<feature type="chain" id="PRO_0000133037" description="Uncharacterized 12.2 kDa protein in P6.5-VP48 intergenic region">
    <location>
        <begin position="1"/>
        <end position="112"/>
    </location>
</feature>
<feature type="region of interest" description="Disordered" evidence="1">
    <location>
        <begin position="1"/>
        <end position="27"/>
    </location>
</feature>
<dbReference type="EMBL" id="D13959">
    <property type="protein sequence ID" value="BAA03059.1"/>
    <property type="molecule type" value="Genomic_DNA"/>
</dbReference>
<dbReference type="EMBL" id="U75930">
    <property type="protein sequence ID" value="AAC59102.1"/>
    <property type="molecule type" value="Genomic_DNA"/>
</dbReference>
<dbReference type="PIR" id="B34526">
    <property type="entry name" value="B34526"/>
</dbReference>
<dbReference type="RefSeq" id="NP_046259.1">
    <property type="nucleotide sequence ID" value="NC_001875.2"/>
</dbReference>
<dbReference type="KEGG" id="vg:911965"/>
<dbReference type="OrthoDB" id="18813at10239"/>
<dbReference type="Proteomes" id="UP000009248">
    <property type="component" value="Genome"/>
</dbReference>
<dbReference type="InterPro" id="IPR009477">
    <property type="entry name" value="Baculo_Ac102"/>
</dbReference>
<dbReference type="Pfam" id="PF06497">
    <property type="entry name" value="Baculo_Ac102"/>
    <property type="match status" value="1"/>
</dbReference>
<keyword id="KW-0426">Late protein</keyword>
<keyword id="KW-1185">Reference proteome</keyword>
<sequence length="112" mass="12160">MIASIGDSAEPPLRRTRRAQQQDRPPTQLAAAEMLHNMNGAETAASFIVKDASENKIASLTTLGNQSIAARKLVESLQAGAPTIKLNREDTVNVLKFLNDVYTNQLEVVNIS</sequence>
<gene>
    <name type="ORF">ORF103</name>
</gene>
<evidence type="ECO:0000256" key="1">
    <source>
        <dbReference type="SAM" id="MobiDB-lite"/>
    </source>
</evidence>
<proteinExistence type="predicted"/>
<accession>P24652</accession>
<reference key="1">
    <citation type="journal article" date="1990" name="J. Gen. Virol.">
        <title>The p6.5 gene region of a nuclear polyhedrosis virus of Orgyia pseudotsugata: DNA sequence and transcriptional analysis of four late genes.</title>
        <authorList>
            <person name="Russell R.L.Q."/>
            <person name="Rohrmann G.F."/>
        </authorList>
    </citation>
    <scope>NUCLEOTIDE SEQUENCE [GENOMIC DNA]</scope>
</reference>
<reference key="2">
    <citation type="journal article" date="1990" name="Virology">
        <title>A capsid-associated protein of the multicapsid nuclear polyhedrosis virus of Orgyia pseudotsugata: genetic location, sequence, transcriptional mapping, and immunocytochemical characterization.</title>
        <authorList>
            <person name="Mueller R."/>
            <person name="Pearson M.N."/>
            <person name="Russell R.L.Q."/>
            <person name="Rohrmann G.F."/>
        </authorList>
    </citation>
    <scope>NUCLEOTIDE SEQUENCE [GENOMIC DNA]</scope>
</reference>
<reference key="3">
    <citation type="journal article" date="1997" name="Virology">
        <title>The sequence of the Orgyia pseudotsugata multinucleocapsid nuclear polyhedrosis virus genome.</title>
        <authorList>
            <person name="Ahrens C.H."/>
            <person name="Russell R.R."/>
            <person name="Funk C.J."/>
            <person name="Evans J."/>
            <person name="Harwood S."/>
            <person name="Rohrmann G.F."/>
        </authorList>
    </citation>
    <scope>NUCLEOTIDE SEQUENCE [LARGE SCALE GENOMIC DNA]</scope>
</reference>